<sequence length="343" mass="40208">MAEKKGPEAKKQKKMKNKSKVEETDAGEEAGASEEQQQVTRLPPAFSLSEIKNKQRRQFMFIKLKQEKRKEKLILRKKRKKEREALGDKAPPKPVPKTIENQRVYDETTVDPADEEVALDEATDEFAPYFNKQTTPKILITTSDRPRGRSVRFTEQLSSIIPNSDVYYRRGLALKKIIPQCVSRDYTDLLVINEDRKVPNGLVLCHLPDGPTAHFKISNVRLRKEMKRKGKEPTEHKPEVILNNFTTRLGHSIGRMFASLYPHDPHFVGRQVATFHNQRDYIFFRYHRYLFKSEKKVGIQELGPRFTLKLRSLQKGTFDSKYGEYEWVHKRHEMDTSRRKFHL</sequence>
<reference key="1">
    <citation type="submission" date="2002-12" db="EMBL/GenBank/DDBJ databases">
        <authorList>
            <consortium name="NIH - Xenopus Gene Collection (XGC) project"/>
        </authorList>
    </citation>
    <scope>NUCLEOTIDE SEQUENCE [LARGE SCALE MRNA]</scope>
    <source>
        <tissue>Embryo</tissue>
    </source>
</reference>
<name>RPF1_XENLA</name>
<protein>
    <recommendedName>
        <fullName>Ribosome production factor 1</fullName>
    </recommendedName>
    <alternativeName>
        <fullName>Brix domain-containing protein 5</fullName>
    </alternativeName>
    <alternativeName>
        <fullName>Ribosome biogenesis protein RPF1</fullName>
    </alternativeName>
</protein>
<evidence type="ECO:0000250" key="1"/>
<evidence type="ECO:0000255" key="2">
    <source>
        <dbReference type="PROSITE-ProRule" id="PRU00034"/>
    </source>
</evidence>
<evidence type="ECO:0000256" key="3">
    <source>
        <dbReference type="SAM" id="MobiDB-lite"/>
    </source>
</evidence>
<gene>
    <name type="primary">rpf1</name>
    <name type="synonym">bxdc5</name>
</gene>
<accession>Q8AVP1</accession>
<comment type="function">
    <text evidence="1">May be required for ribosome biogenesis.</text>
</comment>
<comment type="subcellular location">
    <subcellularLocation>
        <location evidence="1">Nucleus</location>
        <location evidence="1">Nucleolus</location>
    </subcellularLocation>
</comment>
<feature type="chain" id="PRO_0000120253" description="Ribosome production factor 1">
    <location>
        <begin position="1"/>
        <end position="343"/>
    </location>
</feature>
<feature type="domain" description="Brix" evidence="2">
    <location>
        <begin position="136"/>
        <end position="319"/>
    </location>
</feature>
<feature type="region of interest" description="Disordered" evidence="3">
    <location>
        <begin position="1"/>
        <end position="51"/>
    </location>
</feature>
<feature type="region of interest" description="Disordered" evidence="3">
    <location>
        <begin position="77"/>
        <end position="97"/>
    </location>
</feature>
<feature type="region of interest" description="RNA-binding" evidence="1">
    <location>
        <begin position="297"/>
        <end position="314"/>
    </location>
</feature>
<feature type="compositionally biased region" description="Basic and acidic residues" evidence="3">
    <location>
        <begin position="1"/>
        <end position="10"/>
    </location>
</feature>
<feature type="compositionally biased region" description="Basic and acidic residues" evidence="3">
    <location>
        <begin position="82"/>
        <end position="91"/>
    </location>
</feature>
<dbReference type="EMBL" id="BC041557">
    <property type="protein sequence ID" value="AAH41557.1"/>
    <property type="molecule type" value="mRNA"/>
</dbReference>
<dbReference type="RefSeq" id="NP_001080272.1">
    <property type="nucleotide sequence ID" value="NM_001086803.1"/>
</dbReference>
<dbReference type="SMR" id="Q8AVP1"/>
<dbReference type="DNASU" id="379964"/>
<dbReference type="GeneID" id="379964"/>
<dbReference type="KEGG" id="xla:379964"/>
<dbReference type="CTD" id="379964"/>
<dbReference type="OrthoDB" id="10253204at2759"/>
<dbReference type="Proteomes" id="UP000186698">
    <property type="component" value="Chromosome 4S"/>
</dbReference>
<dbReference type="Bgee" id="379964">
    <property type="expression patterns" value="Expressed in neurula embryo and 19 other cell types or tissues"/>
</dbReference>
<dbReference type="GO" id="GO:0005730">
    <property type="term" value="C:nucleolus"/>
    <property type="evidence" value="ECO:0000250"/>
    <property type="project" value="UniProtKB"/>
</dbReference>
<dbReference type="GO" id="GO:0030687">
    <property type="term" value="C:preribosome, large subunit precursor"/>
    <property type="evidence" value="ECO:0000318"/>
    <property type="project" value="GO_Central"/>
</dbReference>
<dbReference type="GO" id="GO:0003723">
    <property type="term" value="F:RNA binding"/>
    <property type="evidence" value="ECO:0000250"/>
    <property type="project" value="UniProtKB"/>
</dbReference>
<dbReference type="GO" id="GO:0042134">
    <property type="term" value="F:rRNA primary transcript binding"/>
    <property type="evidence" value="ECO:0007669"/>
    <property type="project" value="InterPro"/>
</dbReference>
<dbReference type="GO" id="GO:0000460">
    <property type="term" value="P:maturation of 5.8S rRNA"/>
    <property type="evidence" value="ECO:0000318"/>
    <property type="project" value="GO_Central"/>
</dbReference>
<dbReference type="GO" id="GO:0000470">
    <property type="term" value="P:maturation of LSU-rRNA"/>
    <property type="evidence" value="ECO:0000318"/>
    <property type="project" value="GO_Central"/>
</dbReference>
<dbReference type="FunFam" id="3.40.50.10480:FF:000002">
    <property type="entry name" value="Ribosome production factor 1"/>
    <property type="match status" value="1"/>
</dbReference>
<dbReference type="Gene3D" id="3.40.50.10480">
    <property type="entry name" value="Probable brix-domain ribosomal biogenesis protein"/>
    <property type="match status" value="1"/>
</dbReference>
<dbReference type="InterPro" id="IPR007109">
    <property type="entry name" value="Brix"/>
</dbReference>
<dbReference type="InterPro" id="IPR044281">
    <property type="entry name" value="IMP4/RPF1"/>
</dbReference>
<dbReference type="PANTHER" id="PTHR22734:SF3">
    <property type="entry name" value="RIBOSOME PRODUCTION FACTOR 1"/>
    <property type="match status" value="1"/>
</dbReference>
<dbReference type="PANTHER" id="PTHR22734">
    <property type="entry name" value="U3 SMALL NUCLEOLAR RIBONUCLEOPROTEIN PROTEIN IMP4"/>
    <property type="match status" value="1"/>
</dbReference>
<dbReference type="Pfam" id="PF04427">
    <property type="entry name" value="Brix"/>
    <property type="match status" value="1"/>
</dbReference>
<dbReference type="SMART" id="SM00879">
    <property type="entry name" value="Brix"/>
    <property type="match status" value="1"/>
</dbReference>
<dbReference type="SUPFAM" id="SSF52954">
    <property type="entry name" value="Class II aaRS ABD-related"/>
    <property type="match status" value="1"/>
</dbReference>
<dbReference type="PROSITE" id="PS50833">
    <property type="entry name" value="BRIX"/>
    <property type="match status" value="1"/>
</dbReference>
<organism>
    <name type="scientific">Xenopus laevis</name>
    <name type="common">African clawed frog</name>
    <dbReference type="NCBI Taxonomy" id="8355"/>
    <lineage>
        <taxon>Eukaryota</taxon>
        <taxon>Metazoa</taxon>
        <taxon>Chordata</taxon>
        <taxon>Craniata</taxon>
        <taxon>Vertebrata</taxon>
        <taxon>Euteleostomi</taxon>
        <taxon>Amphibia</taxon>
        <taxon>Batrachia</taxon>
        <taxon>Anura</taxon>
        <taxon>Pipoidea</taxon>
        <taxon>Pipidae</taxon>
        <taxon>Xenopodinae</taxon>
        <taxon>Xenopus</taxon>
        <taxon>Xenopus</taxon>
    </lineage>
</organism>
<keyword id="KW-0539">Nucleus</keyword>
<keyword id="KW-1185">Reference proteome</keyword>
<keyword id="KW-0690">Ribosome biogenesis</keyword>
<keyword id="KW-0694">RNA-binding</keyword>
<keyword id="KW-0698">rRNA processing</keyword>
<keyword id="KW-0699">rRNA-binding</keyword>
<proteinExistence type="evidence at transcript level"/>